<organism>
    <name type="scientific">Cutibacterium acnes (strain DSM 16379 / KPA171202)</name>
    <name type="common">Propionibacterium acnes</name>
    <dbReference type="NCBI Taxonomy" id="267747"/>
    <lineage>
        <taxon>Bacteria</taxon>
        <taxon>Bacillati</taxon>
        <taxon>Actinomycetota</taxon>
        <taxon>Actinomycetes</taxon>
        <taxon>Propionibacteriales</taxon>
        <taxon>Propionibacteriaceae</taxon>
        <taxon>Cutibacterium</taxon>
    </lineage>
</organism>
<keyword id="KW-0694">RNA-binding</keyword>
<keyword id="KW-0804">Transcription</keyword>
<keyword id="KW-0889">Transcription antitermination</keyword>
<keyword id="KW-0805">Transcription regulation</keyword>
<gene>
    <name evidence="1" type="primary">nusB</name>
    <name type="ordered locus">PPA1188</name>
</gene>
<accession>Q6A8H8</accession>
<evidence type="ECO:0000255" key="1">
    <source>
        <dbReference type="HAMAP-Rule" id="MF_00073"/>
    </source>
</evidence>
<evidence type="ECO:0000256" key="2">
    <source>
        <dbReference type="SAM" id="MobiDB-lite"/>
    </source>
</evidence>
<protein>
    <recommendedName>
        <fullName evidence="1">Transcription antitermination protein NusB</fullName>
    </recommendedName>
    <alternativeName>
        <fullName evidence="1">Antitermination factor NusB</fullName>
    </alternativeName>
</protein>
<feature type="chain" id="PRO_0000265560" description="Transcription antitermination protein NusB">
    <location>
        <begin position="1"/>
        <end position="261"/>
    </location>
</feature>
<feature type="region of interest" description="Disordered" evidence="2">
    <location>
        <begin position="168"/>
        <end position="261"/>
    </location>
</feature>
<feature type="compositionally biased region" description="Polar residues" evidence="2">
    <location>
        <begin position="217"/>
        <end position="228"/>
    </location>
</feature>
<feature type="compositionally biased region" description="Basic and acidic residues" evidence="2">
    <location>
        <begin position="242"/>
        <end position="261"/>
    </location>
</feature>
<name>NUSB_CUTAK</name>
<sequence>MSTNTVPTPDDEGPTEWIGDLEVRRVSGDIQEHADLSTRSKARKQALDILFEADLIGTDPLEVLAARPGVFTNPVRPFAADLVRGVAATQVGLDSVLTDCLSEGWTLARMPRVDRILARLGAFEILHTDTPNPAVISEAIELSEEFSTDDSAPFLNGLLGAVITHGPARVEDQPSDDAASLTCPAPDGGSEQPPITVDDVGSMASSSDSFPAEVGNVDTTSGNASDPENSADDFELTGGEHPTSKDHELATDLHKKDTTDD</sequence>
<comment type="function">
    <text evidence="1">Involved in transcription antitermination. Required for transcription of ribosomal RNA (rRNA) genes. Binds specifically to the boxA antiterminator sequence of the ribosomal RNA (rrn) operons.</text>
</comment>
<comment type="similarity">
    <text evidence="1">Belongs to the NusB family.</text>
</comment>
<dbReference type="EMBL" id="AE017283">
    <property type="protein sequence ID" value="AAT82937.1"/>
    <property type="molecule type" value="Genomic_DNA"/>
</dbReference>
<dbReference type="RefSeq" id="WP_002516819.1">
    <property type="nucleotide sequence ID" value="NZ_CP025935.1"/>
</dbReference>
<dbReference type="SMR" id="Q6A8H8"/>
<dbReference type="EnsemblBacteria" id="AAT82937">
    <property type="protein sequence ID" value="AAT82937"/>
    <property type="gene ID" value="PPA1188"/>
</dbReference>
<dbReference type="GeneID" id="92857159"/>
<dbReference type="KEGG" id="pac:PPA1188"/>
<dbReference type="eggNOG" id="COG0781">
    <property type="taxonomic scope" value="Bacteria"/>
</dbReference>
<dbReference type="HOGENOM" id="CLU_087843_2_1_11"/>
<dbReference type="Proteomes" id="UP000000603">
    <property type="component" value="Chromosome"/>
</dbReference>
<dbReference type="GO" id="GO:0005829">
    <property type="term" value="C:cytosol"/>
    <property type="evidence" value="ECO:0007669"/>
    <property type="project" value="TreeGrafter"/>
</dbReference>
<dbReference type="GO" id="GO:0003723">
    <property type="term" value="F:RNA binding"/>
    <property type="evidence" value="ECO:0007669"/>
    <property type="project" value="UniProtKB-UniRule"/>
</dbReference>
<dbReference type="GO" id="GO:0006353">
    <property type="term" value="P:DNA-templated transcription termination"/>
    <property type="evidence" value="ECO:0007669"/>
    <property type="project" value="UniProtKB-UniRule"/>
</dbReference>
<dbReference type="GO" id="GO:0031564">
    <property type="term" value="P:transcription antitermination"/>
    <property type="evidence" value="ECO:0007669"/>
    <property type="project" value="UniProtKB-KW"/>
</dbReference>
<dbReference type="Gene3D" id="1.10.940.10">
    <property type="entry name" value="NusB-like"/>
    <property type="match status" value="1"/>
</dbReference>
<dbReference type="HAMAP" id="MF_00073">
    <property type="entry name" value="NusB"/>
    <property type="match status" value="1"/>
</dbReference>
<dbReference type="InterPro" id="IPR035926">
    <property type="entry name" value="NusB-like_sf"/>
</dbReference>
<dbReference type="InterPro" id="IPR011605">
    <property type="entry name" value="NusB_fam"/>
</dbReference>
<dbReference type="InterPro" id="IPR006027">
    <property type="entry name" value="NusB_RsmB_TIM44"/>
</dbReference>
<dbReference type="NCBIfam" id="TIGR01951">
    <property type="entry name" value="nusB"/>
    <property type="match status" value="1"/>
</dbReference>
<dbReference type="PANTHER" id="PTHR11078:SF3">
    <property type="entry name" value="ANTITERMINATION NUSB DOMAIN-CONTAINING PROTEIN"/>
    <property type="match status" value="1"/>
</dbReference>
<dbReference type="PANTHER" id="PTHR11078">
    <property type="entry name" value="N UTILIZATION SUBSTANCE PROTEIN B-RELATED"/>
    <property type="match status" value="1"/>
</dbReference>
<dbReference type="Pfam" id="PF01029">
    <property type="entry name" value="NusB"/>
    <property type="match status" value="1"/>
</dbReference>
<dbReference type="SUPFAM" id="SSF48013">
    <property type="entry name" value="NusB-like"/>
    <property type="match status" value="1"/>
</dbReference>
<proteinExistence type="inferred from homology"/>
<reference key="1">
    <citation type="journal article" date="2004" name="Science">
        <title>The complete genome sequence of Propionibacterium acnes, a commensal of human skin.</title>
        <authorList>
            <person name="Brueggemann H."/>
            <person name="Henne A."/>
            <person name="Hoster F."/>
            <person name="Liesegang H."/>
            <person name="Wiezer A."/>
            <person name="Strittmatter A."/>
            <person name="Hujer S."/>
            <person name="Duerre P."/>
            <person name="Gottschalk G."/>
        </authorList>
    </citation>
    <scope>NUCLEOTIDE SEQUENCE [LARGE SCALE GENOMIC DNA]</scope>
    <source>
        <strain>DSM 16379 / KPA171202</strain>
    </source>
</reference>